<organismHost>
    <name type="scientific">Homo sapiens</name>
    <name type="common">Human</name>
    <dbReference type="NCBI Taxonomy" id="9606"/>
</organismHost>
<evidence type="ECO:0000255" key="1"/>
<evidence type="ECO:0000305" key="2"/>
<organism>
    <name type="scientific">Human herpesvirus 6B</name>
    <name type="common">HHV-6 variant B</name>
    <name type="synonym">Human B lymphotropic virus</name>
    <dbReference type="NCBI Taxonomy" id="32604"/>
    <lineage>
        <taxon>Viruses</taxon>
        <taxon>Duplodnaviria</taxon>
        <taxon>Heunggongvirae</taxon>
        <taxon>Peploviricota</taxon>
        <taxon>Herviviricetes</taxon>
        <taxon>Herpesvirales</taxon>
        <taxon>Orthoherpesviridae</taxon>
        <taxon>Betaherpesvirinae</taxon>
        <taxon>Roseolovirus</taxon>
        <taxon>Roseolovirus humanbeta6b</taxon>
    </lineage>
</organism>
<dbReference type="EMBL" id="AB021506">
    <property type="protein sequence ID" value="BAA78239.1"/>
    <property type="molecule type" value="Genomic_DNA"/>
</dbReference>
<dbReference type="PIR" id="T43978">
    <property type="entry name" value="T43978"/>
</dbReference>
<dbReference type="RefSeq" id="NP_050198.1">
    <property type="nucleotide sequence ID" value="NC_000898.1"/>
</dbReference>
<dbReference type="GeneID" id="1497014"/>
<dbReference type="KEGG" id="vg:1497014"/>
<dbReference type="Proteomes" id="UP000142685">
    <property type="component" value="Segment"/>
</dbReference>
<dbReference type="GO" id="GO:0033644">
    <property type="term" value="C:host cell membrane"/>
    <property type="evidence" value="ECO:0007669"/>
    <property type="project" value="UniProtKB-SubCell"/>
</dbReference>
<dbReference type="GO" id="GO:0016020">
    <property type="term" value="C:membrane"/>
    <property type="evidence" value="ECO:0007669"/>
    <property type="project" value="UniProtKB-KW"/>
</dbReference>
<dbReference type="InterPro" id="IPR010880">
    <property type="entry name" value="Herpes_UL37_HHV-5-rel"/>
</dbReference>
<dbReference type="Pfam" id="PF07413">
    <property type="entry name" value="Herpes_UL37_2"/>
    <property type="match status" value="1"/>
</dbReference>
<proteinExistence type="inferred from homology"/>
<name>U18_HHV6H</name>
<keyword id="KW-1043">Host membrane</keyword>
<keyword id="KW-0472">Membrane</keyword>
<keyword id="KW-0732">Signal</keyword>
<keyword id="KW-0812">Transmembrane</keyword>
<keyword id="KW-1133">Transmembrane helix</keyword>
<protein>
    <recommendedName>
        <fullName>Putative immediate early glycoprotein</fullName>
    </recommendedName>
    <alternativeName>
        <fullName>Protein U18</fullName>
    </alternativeName>
</protein>
<gene>
    <name type="primary">U18</name>
</gene>
<comment type="subcellular location">
    <subcellularLocation>
        <location evidence="2">Host membrane</location>
        <topology evidence="2">Single-pass membrane protein</topology>
    </subcellularLocation>
</comment>
<comment type="similarity">
    <text evidence="2">Belongs to the herpesviridae immediate early glycoprotein family.</text>
</comment>
<accession>P0DXM2</accession>
<accession>Q77PV4</accession>
<accession>Q9WT46</accession>
<sequence length="294" mass="33036">MKKLTMESLLVYTFVMGVCFTSNLTCEQKIVLIQEQKLGAICISTCYVNGVLAGNSSCVSVRTSYLINLAMLTDGFKAMKVGNITSISEKTAFLRVIINYYFRGVMLRALIAKRLPNAAQLSSTVNCWLEGHSAGGVMTLFYGTERIVLKSSTEMNASQWTSDGPDANGTLNILNERVSLDSYFLSMICPQLSDEIYKKKVVHSKYFSLIKNDTMPKKFLRNTWKSAWTNWYKYKEIEALLDFSRDYENVSEITHSMSAAGLFFLAGGAFTMLLLLCCLSMITRKHVVKDLGYK</sequence>
<reference key="1">
    <citation type="journal article" date="1999" name="J. Virol.">
        <title>Comparison of the complete DNA sequences of human herpesvirus 6 variants A and B.</title>
        <authorList>
            <person name="Isegawa Y."/>
            <person name="Mukai T."/>
            <person name="Nakano K."/>
            <person name="Kagawa M."/>
            <person name="Chen J."/>
            <person name="Mori Y."/>
            <person name="Sunagawa T."/>
            <person name="Kawanishi K."/>
            <person name="Sashihara J."/>
            <person name="Hata A."/>
            <person name="Zou P."/>
            <person name="Kosuge H."/>
            <person name="Yamanishi K."/>
        </authorList>
    </citation>
    <scope>NUCLEOTIDE SEQUENCE [LARGE SCALE GENOMIC DNA]</scope>
    <source>
        <strain>HST</strain>
    </source>
</reference>
<feature type="signal peptide" evidence="1">
    <location>
        <begin position="1"/>
        <end position="21"/>
    </location>
</feature>
<feature type="chain" id="PRO_0000461144" description="Putative immediate early glycoprotein">
    <location>
        <begin position="22"/>
        <end position="294"/>
    </location>
</feature>
<feature type="transmembrane region" description="Helical" evidence="1">
    <location>
        <begin position="262"/>
        <end position="282"/>
    </location>
</feature>